<gene>
    <name type="primary">MTHFD1</name>
    <name type="synonym">MTHFC</name>
    <name type="synonym">MTHFD</name>
</gene>
<protein>
    <recommendedName>
        <fullName evidence="21">C-1-tetrahydrofolate synthase, cytoplasmic</fullName>
        <shortName>C1-THF synthase</shortName>
    </recommendedName>
    <alternativeName>
        <fullName evidence="19">Epididymis secretory sperm binding protein</fullName>
    </alternativeName>
    <domain>
        <recommendedName>
            <fullName evidence="21">Methylenetetrahydrofolate dehydrogenase</fullName>
            <ecNumber evidence="2 9 10">1.5.1.5</ecNumber>
        </recommendedName>
    </domain>
    <domain>
        <recommendedName>
            <fullName evidence="21">Methenyltetrahydrofolate cyclohydrolase</fullName>
            <ecNumber evidence="2 10">3.5.4.9</ecNumber>
        </recommendedName>
    </domain>
    <domain>
        <recommendedName>
            <fullName evidence="21">Formyltetrahydrofolate synthetase</fullName>
            <ecNumber evidence="9 10">6.3.4.3</ecNumber>
        </recommendedName>
    </domain>
    <component>
        <recommendedName>
            <fullName>C-1-tetrahydrofolate synthase, cytoplasmic, N-terminally processed</fullName>
        </recommendedName>
    </component>
</protein>
<sequence>MAPAEILNGKEISAQIRARLKNQVTQLKEQVPGFTPRLAILQVGNRDDSNLYINVKLKAAEEIGIKATHIKLPRTTTESEVMKYITSLNEDSTVHGFLVQLPLDSENSINTEEVINAIAPEKDVDGLTSINAGKLARGDLNDCFIPCTPKGCLELIKETGVPIAGRHAVVVGRSKIVGAPMHDLLLWNNATVTTCHSKTAHLDEEVNKGDILVVATGQPEMVKGEWIKPGAIVIDCGINYVPDDKKPNGRKVVGDVAYDEAKERASFITPVPGGVGPMTVAMLMQSTVESAKRFLEKFKPGKWMIQYNNLNLKTPVPSDIDISRSCKPKPIGKLAREIGLLSEEVELYGETKAKVLLSALERLKHRPDGKYVVVTGITPTPLGEGKSTTTIGLVQALGAHLYQNVFACVRQPSQGPTFGIKGGAAGGGYSQVIPMEEFNLHLTGDIHAITAANNLVAAAIDARIFHELTQTDKALFNRLVPSVNGVRRFSDIQIRRLKRLGIEKTDPTTLTDEEINRFARLDIDPETITWQRVLDTNDRFLRKITIGQAPTEKGHTRTAQFDISVASEIMAVLALTTSLEDMRERLGKMVVASSKKGEPVSAEDLGVSGALTVLMKDAIKPNLMQTLEGTPVFVHAGPFANIAHGNSSIIADRIALKLVGPEGFVVTEAGFGADIGMEKFFNIKCRYSGLCPHVVVLVATVRALKMHGGGPTVTAGLPLPKAYIQENLELVEKGFSNLKKQIENARMFGIPVVVAVNAFKTDTESELDLISRLSREHGAFDAVKCTHWAEGGKGALALAQAVQRAAQAPSSFQLLYDLKLPVEDKIRIIAQKIYGADDIELLPEAQHKAEVYTKQGFGNLPICMAKTHLSLSHNPEQKGVPTGFILPIRDIRASVGAGFLYPLVGTMSTMPGLPTRPCFYDIDLDPETEQVNGLF</sequence>
<reference key="1">
    <citation type="journal article" date="1988" name="J. Biol. Chem.">
        <title>Primary structure of a human trifunctional enzyme. Isolation of a cDNA encoding methylenetetrahydrofolate dehydrogenase-methenyltetrahydrofolate cyclohydrolase-formyltetrahydrofolate synthetase.</title>
        <authorList>
            <person name="Hum D.W."/>
            <person name="Bell A.W."/>
            <person name="Rozen R."/>
            <person name="Mackenzie R.E."/>
        </authorList>
    </citation>
    <scope>NUCLEOTIDE SEQUENCE [MRNA]</scope>
    <scope>PROTEIN SEQUENCE OF 2-31</scope>
    <scope>VARIANT ARG-134</scope>
    <scope>SUBCELLULAR LOCATION</scope>
    <source>
        <tissue>Liver</tissue>
    </source>
</reference>
<reference key="2">
    <citation type="journal article" date="2004" name="Nat. Genet.">
        <title>Complete sequencing and characterization of 21,243 full-length human cDNAs.</title>
        <authorList>
            <person name="Ota T."/>
            <person name="Suzuki Y."/>
            <person name="Nishikawa T."/>
            <person name="Otsuki T."/>
            <person name="Sugiyama T."/>
            <person name="Irie R."/>
            <person name="Wakamatsu A."/>
            <person name="Hayashi K."/>
            <person name="Sato H."/>
            <person name="Nagai K."/>
            <person name="Kimura K."/>
            <person name="Makita H."/>
            <person name="Sekine M."/>
            <person name="Obayashi M."/>
            <person name="Nishi T."/>
            <person name="Shibahara T."/>
            <person name="Tanaka T."/>
            <person name="Ishii S."/>
            <person name="Yamamoto J."/>
            <person name="Saito K."/>
            <person name="Kawai Y."/>
            <person name="Isono Y."/>
            <person name="Nakamura Y."/>
            <person name="Nagahari K."/>
            <person name="Murakami K."/>
            <person name="Yasuda T."/>
            <person name="Iwayanagi T."/>
            <person name="Wagatsuma M."/>
            <person name="Shiratori A."/>
            <person name="Sudo H."/>
            <person name="Hosoiri T."/>
            <person name="Kaku Y."/>
            <person name="Kodaira H."/>
            <person name="Kondo H."/>
            <person name="Sugawara M."/>
            <person name="Takahashi M."/>
            <person name="Kanda K."/>
            <person name="Yokoi T."/>
            <person name="Furuya T."/>
            <person name="Kikkawa E."/>
            <person name="Omura Y."/>
            <person name="Abe K."/>
            <person name="Kamihara K."/>
            <person name="Katsuta N."/>
            <person name="Sato K."/>
            <person name="Tanikawa M."/>
            <person name="Yamazaki M."/>
            <person name="Ninomiya K."/>
            <person name="Ishibashi T."/>
            <person name="Yamashita H."/>
            <person name="Murakawa K."/>
            <person name="Fujimori K."/>
            <person name="Tanai H."/>
            <person name="Kimata M."/>
            <person name="Watanabe M."/>
            <person name="Hiraoka S."/>
            <person name="Chiba Y."/>
            <person name="Ishida S."/>
            <person name="Ono Y."/>
            <person name="Takiguchi S."/>
            <person name="Watanabe S."/>
            <person name="Yosida M."/>
            <person name="Hotuta T."/>
            <person name="Kusano J."/>
            <person name="Kanehori K."/>
            <person name="Takahashi-Fujii A."/>
            <person name="Hara H."/>
            <person name="Tanase T.-O."/>
            <person name="Nomura Y."/>
            <person name="Togiya S."/>
            <person name="Komai F."/>
            <person name="Hara R."/>
            <person name="Takeuchi K."/>
            <person name="Arita M."/>
            <person name="Imose N."/>
            <person name="Musashino K."/>
            <person name="Yuuki H."/>
            <person name="Oshima A."/>
            <person name="Sasaki N."/>
            <person name="Aotsuka S."/>
            <person name="Yoshikawa Y."/>
            <person name="Matsunawa H."/>
            <person name="Ichihara T."/>
            <person name="Shiohata N."/>
            <person name="Sano S."/>
            <person name="Moriya S."/>
            <person name="Momiyama H."/>
            <person name="Satoh N."/>
            <person name="Takami S."/>
            <person name="Terashima Y."/>
            <person name="Suzuki O."/>
            <person name="Nakagawa S."/>
            <person name="Senoh A."/>
            <person name="Mizoguchi H."/>
            <person name="Goto Y."/>
            <person name="Shimizu F."/>
            <person name="Wakebe H."/>
            <person name="Hishigaki H."/>
            <person name="Watanabe T."/>
            <person name="Sugiyama A."/>
            <person name="Takemoto M."/>
            <person name="Kawakami B."/>
            <person name="Yamazaki M."/>
            <person name="Watanabe K."/>
            <person name="Kumagai A."/>
            <person name="Itakura S."/>
            <person name="Fukuzumi Y."/>
            <person name="Fujimori Y."/>
            <person name="Komiyama M."/>
            <person name="Tashiro H."/>
            <person name="Tanigami A."/>
            <person name="Fujiwara T."/>
            <person name="Ono T."/>
            <person name="Yamada K."/>
            <person name="Fujii Y."/>
            <person name="Ozaki K."/>
            <person name="Hirao M."/>
            <person name="Ohmori Y."/>
            <person name="Kawabata A."/>
            <person name="Hikiji T."/>
            <person name="Kobatake N."/>
            <person name="Inagaki H."/>
            <person name="Ikema Y."/>
            <person name="Okamoto S."/>
            <person name="Okitani R."/>
            <person name="Kawakami T."/>
            <person name="Noguchi S."/>
            <person name="Itoh T."/>
            <person name="Shigeta K."/>
            <person name="Senba T."/>
            <person name="Matsumura K."/>
            <person name="Nakajima Y."/>
            <person name="Mizuno T."/>
            <person name="Morinaga M."/>
            <person name="Sasaki M."/>
            <person name="Togashi T."/>
            <person name="Oyama M."/>
            <person name="Hata H."/>
            <person name="Watanabe M."/>
            <person name="Komatsu T."/>
            <person name="Mizushima-Sugano J."/>
            <person name="Satoh T."/>
            <person name="Shirai Y."/>
            <person name="Takahashi Y."/>
            <person name="Nakagawa K."/>
            <person name="Okumura K."/>
            <person name="Nagase T."/>
            <person name="Nomura N."/>
            <person name="Kikuchi H."/>
            <person name="Masuho Y."/>
            <person name="Yamashita R."/>
            <person name="Nakai K."/>
            <person name="Yada T."/>
            <person name="Nakamura Y."/>
            <person name="Ohara O."/>
            <person name="Isogai T."/>
            <person name="Sugano S."/>
        </authorList>
    </citation>
    <scope>NUCLEOTIDE SEQUENCE [LARGE SCALE MRNA]</scope>
    <scope>VARIANTS ARG-134 AND GLN-653</scope>
    <source>
        <tissue>Amygdala</tissue>
    </source>
</reference>
<reference key="3">
    <citation type="submission" date="2009-09" db="EMBL/GenBank/DDBJ databases">
        <authorList>
            <person name="Li J.Y."/>
        </authorList>
    </citation>
    <scope>NUCLEOTIDE SEQUENCE [MRNA]</scope>
</reference>
<reference key="4">
    <citation type="journal article" date="2003" name="Nature">
        <title>The DNA sequence and analysis of human chromosome 14.</title>
        <authorList>
            <person name="Heilig R."/>
            <person name="Eckenberg R."/>
            <person name="Petit J.-L."/>
            <person name="Fonknechten N."/>
            <person name="Da Silva C."/>
            <person name="Cattolico L."/>
            <person name="Levy M."/>
            <person name="Barbe V."/>
            <person name="De Berardinis V."/>
            <person name="Ureta-Vidal A."/>
            <person name="Pelletier E."/>
            <person name="Vico V."/>
            <person name="Anthouard V."/>
            <person name="Rowen L."/>
            <person name="Madan A."/>
            <person name="Qin S."/>
            <person name="Sun H."/>
            <person name="Du H."/>
            <person name="Pepin K."/>
            <person name="Artiguenave F."/>
            <person name="Robert C."/>
            <person name="Cruaud C."/>
            <person name="Bruels T."/>
            <person name="Jaillon O."/>
            <person name="Friedlander L."/>
            <person name="Samson G."/>
            <person name="Brottier P."/>
            <person name="Cure S."/>
            <person name="Segurens B."/>
            <person name="Aniere F."/>
            <person name="Samain S."/>
            <person name="Crespeau H."/>
            <person name="Abbasi N."/>
            <person name="Aiach N."/>
            <person name="Boscus D."/>
            <person name="Dickhoff R."/>
            <person name="Dors M."/>
            <person name="Dubois I."/>
            <person name="Friedman C."/>
            <person name="Gouyvenoux M."/>
            <person name="James R."/>
            <person name="Madan A."/>
            <person name="Mairey-Estrada B."/>
            <person name="Mangenot S."/>
            <person name="Martins N."/>
            <person name="Menard M."/>
            <person name="Oztas S."/>
            <person name="Ratcliffe A."/>
            <person name="Shaffer T."/>
            <person name="Trask B."/>
            <person name="Vacherie B."/>
            <person name="Bellemere C."/>
            <person name="Belser C."/>
            <person name="Besnard-Gonnet M."/>
            <person name="Bartol-Mavel D."/>
            <person name="Boutard M."/>
            <person name="Briez-Silla S."/>
            <person name="Combette S."/>
            <person name="Dufosse-Laurent V."/>
            <person name="Ferron C."/>
            <person name="Lechaplais C."/>
            <person name="Louesse C."/>
            <person name="Muselet D."/>
            <person name="Magdelenat G."/>
            <person name="Pateau E."/>
            <person name="Petit E."/>
            <person name="Sirvain-Trukniewicz P."/>
            <person name="Trybou A."/>
            <person name="Vega-Czarny N."/>
            <person name="Bataille E."/>
            <person name="Bluet E."/>
            <person name="Bordelais I."/>
            <person name="Dubois M."/>
            <person name="Dumont C."/>
            <person name="Guerin T."/>
            <person name="Haffray S."/>
            <person name="Hammadi R."/>
            <person name="Muanga J."/>
            <person name="Pellouin V."/>
            <person name="Robert D."/>
            <person name="Wunderle E."/>
            <person name="Gauguet G."/>
            <person name="Roy A."/>
            <person name="Sainte-Marthe L."/>
            <person name="Verdier J."/>
            <person name="Verdier-Discala C."/>
            <person name="Hillier L.W."/>
            <person name="Fulton L."/>
            <person name="McPherson J."/>
            <person name="Matsuda F."/>
            <person name="Wilson R."/>
            <person name="Scarpelli C."/>
            <person name="Gyapay G."/>
            <person name="Wincker P."/>
            <person name="Saurin W."/>
            <person name="Quetier F."/>
            <person name="Waterston R."/>
            <person name="Hood L."/>
            <person name="Weissenbach J."/>
        </authorList>
    </citation>
    <scope>NUCLEOTIDE SEQUENCE [LARGE SCALE GENOMIC DNA]</scope>
</reference>
<reference key="5">
    <citation type="submission" date="2005-07" db="EMBL/GenBank/DDBJ databases">
        <authorList>
            <person name="Mural R.J."/>
            <person name="Istrail S."/>
            <person name="Sutton G.G."/>
            <person name="Florea L."/>
            <person name="Halpern A.L."/>
            <person name="Mobarry C.M."/>
            <person name="Lippert R."/>
            <person name="Walenz B."/>
            <person name="Shatkay H."/>
            <person name="Dew I."/>
            <person name="Miller J.R."/>
            <person name="Flanigan M.J."/>
            <person name="Edwards N.J."/>
            <person name="Bolanos R."/>
            <person name="Fasulo D."/>
            <person name="Halldorsson B.V."/>
            <person name="Hannenhalli S."/>
            <person name="Turner R."/>
            <person name="Yooseph S."/>
            <person name="Lu F."/>
            <person name="Nusskern D.R."/>
            <person name="Shue B.C."/>
            <person name="Zheng X.H."/>
            <person name="Zhong F."/>
            <person name="Delcher A.L."/>
            <person name="Huson D.H."/>
            <person name="Kravitz S.A."/>
            <person name="Mouchard L."/>
            <person name="Reinert K."/>
            <person name="Remington K.A."/>
            <person name="Clark A.G."/>
            <person name="Waterman M.S."/>
            <person name="Eichler E.E."/>
            <person name="Adams M.D."/>
            <person name="Hunkapiller M.W."/>
            <person name="Myers E.W."/>
            <person name="Venter J.C."/>
        </authorList>
    </citation>
    <scope>NUCLEOTIDE SEQUENCE [LARGE SCALE GENOMIC DNA]</scope>
    <scope>VARIANTS ARG-134 AND GLN-653</scope>
</reference>
<reference key="6">
    <citation type="journal article" date="2004" name="Genome Res.">
        <title>The status, quality, and expansion of the NIH full-length cDNA project: the Mammalian Gene Collection (MGC).</title>
        <authorList>
            <consortium name="The MGC Project Team"/>
        </authorList>
    </citation>
    <scope>NUCLEOTIDE SEQUENCE [LARGE SCALE MRNA]</scope>
    <scope>VARIANTS ARG-134; GLN-653 AND PHE-769</scope>
    <source>
        <tissue>Brain</tissue>
        <tissue>Eye</tissue>
        <tissue>Lymph</tissue>
    </source>
</reference>
<reference key="7">
    <citation type="journal article" date="2003" name="Nat. Biotechnol.">
        <title>Exploring proteomes and analyzing protein processing by mass spectrometric identification of sorted N-terminal peptides.</title>
        <authorList>
            <person name="Gevaert K."/>
            <person name="Goethals M."/>
            <person name="Martens L."/>
            <person name="Van Damme J."/>
            <person name="Staes A."/>
            <person name="Thomas G.R."/>
            <person name="Vandekerckhove J."/>
        </authorList>
    </citation>
    <scope>PROTEIN SEQUENCE OF 2-17</scope>
    <source>
        <tissue>Platelet</tissue>
    </source>
</reference>
<reference key="8">
    <citation type="submission" date="2009-07" db="UniProtKB">
        <authorList>
            <person name="Bienvenut W.V."/>
            <person name="Gao M."/>
            <person name="Leug H."/>
            <person name="Campbell A."/>
            <person name="Ozanne B.W."/>
        </authorList>
    </citation>
    <scope>PROTEIN SEQUENCE OF 2-17; 251-264; 314-324; 355-362; 596-616 AND 722-733</scope>
    <scope>CLEAVAGE OF INITIATOR METHIONINE</scope>
    <scope>IDENTIFICATION BY MASS SPECTROMETRY</scope>
    <source>
        <tissue>Foreskin fibroblast</tissue>
        <tissue>Prostatic carcinoma</tissue>
    </source>
</reference>
<reference key="9">
    <citation type="journal article" date="1991" name="Protein Eng.">
        <title>Expression of active domains of a human folate-dependent trifunctional enzyme in Escherichia coli.</title>
        <authorList>
            <person name="Hum D.W."/>
            <person name="MacKenzie R.E."/>
        </authorList>
    </citation>
    <scope>FUNCTION</scope>
    <scope>CATALYTIC ACTIVITY</scope>
    <scope>PATHWAY</scope>
    <scope>DOMAIN</scope>
</reference>
<reference key="10">
    <citation type="journal article" date="2003" name="Nature">
        <title>Proteomic characterization of the human centrosome by protein correlation profiling.</title>
        <authorList>
            <person name="Andersen J.S."/>
            <person name="Wilkinson C.J."/>
            <person name="Mayor T."/>
            <person name="Mortensen P."/>
            <person name="Nigg E.A."/>
            <person name="Mann M."/>
        </authorList>
    </citation>
    <scope>IDENTIFICATION BY MASS SPECTROMETRY</scope>
    <source>
        <tissue>Lymphoblast</tissue>
    </source>
</reference>
<reference key="11">
    <citation type="journal article" date="2009" name="Anal. Chem.">
        <title>Lys-N and trypsin cover complementary parts of the phosphoproteome in a refined SCX-based approach.</title>
        <authorList>
            <person name="Gauci S."/>
            <person name="Helbig A.O."/>
            <person name="Slijper M."/>
            <person name="Krijgsveld J."/>
            <person name="Heck A.J."/>
            <person name="Mohammed S."/>
        </authorList>
    </citation>
    <scope>ACETYLATION [LARGE SCALE ANALYSIS] AT MET-1</scope>
    <scope>IDENTIFICATION BY MASS SPECTROMETRY [LARGE SCALE ANALYSIS]</scope>
</reference>
<reference key="12">
    <citation type="journal article" date="2011" name="BMC Syst. Biol.">
        <title>Initial characterization of the human central proteome.</title>
        <authorList>
            <person name="Burkard T.R."/>
            <person name="Planyavsky M."/>
            <person name="Kaupe I."/>
            <person name="Breitwieser F.P."/>
            <person name="Buerckstuemmer T."/>
            <person name="Bennett K.L."/>
            <person name="Superti-Furga G."/>
            <person name="Colinge J."/>
        </authorList>
    </citation>
    <scope>IDENTIFICATION BY MASS SPECTROMETRY [LARGE SCALE ANALYSIS]</scope>
</reference>
<reference key="13">
    <citation type="journal article" date="2012" name="Mol. Cell. Proteomics">
        <title>Comparative large-scale characterisation of plant vs. mammal proteins reveals similar and idiosyncratic N-alpha acetylation features.</title>
        <authorList>
            <person name="Bienvenut W.V."/>
            <person name="Sumpton D."/>
            <person name="Martinez A."/>
            <person name="Lilla S."/>
            <person name="Espagne C."/>
            <person name="Meinnel T."/>
            <person name="Giglione C."/>
        </authorList>
    </citation>
    <scope>ACETYLATION [LARGE SCALE ANALYSIS] AT MET-1</scope>
    <scope>IDENTIFICATION BY MASS SPECTROMETRY [LARGE SCALE ANALYSIS]</scope>
</reference>
<reference key="14">
    <citation type="journal article" date="2012" name="Proc. Natl. Acad. Sci. U.S.A.">
        <title>N-terminal acetylome analyses and functional insights of the N-terminal acetyltransferase NatB.</title>
        <authorList>
            <person name="Van Damme P."/>
            <person name="Lasa M."/>
            <person name="Polevoda B."/>
            <person name="Gazquez C."/>
            <person name="Elosegui-Artola A."/>
            <person name="Kim D.S."/>
            <person name="De Juan-Pardo E."/>
            <person name="Demeyer K."/>
            <person name="Hole K."/>
            <person name="Larrea E."/>
            <person name="Timmerman E."/>
            <person name="Prieto J."/>
            <person name="Arnesen T."/>
            <person name="Sherman F."/>
            <person name="Gevaert K."/>
            <person name="Aldabe R."/>
        </authorList>
    </citation>
    <scope>ACETYLATION [LARGE SCALE ANALYSIS] AT MET-1</scope>
    <scope>IDENTIFICATION BY MASS SPECTROMETRY [LARGE SCALE ANALYSIS]</scope>
</reference>
<reference key="15">
    <citation type="journal article" date="2014" name="J. Proteomics">
        <title>An enzyme assisted RP-RPLC approach for in-depth analysis of human liver phosphoproteome.</title>
        <authorList>
            <person name="Bian Y."/>
            <person name="Song C."/>
            <person name="Cheng K."/>
            <person name="Dong M."/>
            <person name="Wang F."/>
            <person name="Huang J."/>
            <person name="Sun D."/>
            <person name="Wang L."/>
            <person name="Ye M."/>
            <person name="Zou H."/>
        </authorList>
    </citation>
    <scope>PHOSPHORYLATION [LARGE SCALE ANALYSIS] AT SER-318; SER-413 AND SER-490</scope>
    <scope>IDENTIFICATION BY MASS SPECTROMETRY [LARGE SCALE ANALYSIS]</scope>
    <source>
        <tissue>Liver</tissue>
    </source>
</reference>
<reference key="16">
    <citation type="journal article" date="2015" name="Proteomics">
        <title>N-terminome analysis of the human mitochondrial proteome.</title>
        <authorList>
            <person name="Vaca Jacome A.S."/>
            <person name="Rabilloud T."/>
            <person name="Schaeffer-Reiss C."/>
            <person name="Rompais M."/>
            <person name="Ayoub D."/>
            <person name="Lane L."/>
            <person name="Bairoch A."/>
            <person name="Van Dorsselaer A."/>
            <person name="Carapito C."/>
        </authorList>
    </citation>
    <scope>IDENTIFICATION BY MASS SPECTROMETRY [LARGE SCALE ANALYSIS]</scope>
</reference>
<reference evidence="23" key="17">
    <citation type="journal article" date="1998" name="Structure">
        <title>The 3-D structure of a folate-dependent dehydrogenase/cyclohydrolase bifunctional enzyme at 1.5-A resolution.</title>
        <authorList>
            <person name="Allaire M."/>
            <person name="Li Y."/>
            <person name="Mackenzie R.E."/>
            <person name="Cygler M."/>
        </authorList>
    </citation>
    <scope>X-RAY CRYSTALLOGRAPHY (1.5 ANGSTROMS) OF 1-302 IN COMPLEX WITH NADP</scope>
</reference>
<reference evidence="24 25 26" key="18">
    <citation type="journal article" date="2000" name="Biochemistry">
        <title>Structures of three inhibitor complexes provide insight into the reaction mechanism of the human methylenetetrahydrofolate dehydrogenase/cyclohydrolase.</title>
        <authorList>
            <person name="Schmidt A."/>
            <person name="Wu H."/>
            <person name="MacKenzie R.E."/>
            <person name="Chen V.J."/>
            <person name="Bewly J.R."/>
            <person name="Ray J.E."/>
            <person name="Toth J.E."/>
            <person name="Cygler M."/>
        </authorList>
    </citation>
    <scope>X-RAY CRYSTALLOGRAPHY (2.1 ANGSTROMS) OF 1-306 IN COMPLEX WITH NADP AND SUBSTRATE ANALOGS</scope>
    <scope>FUNCTION</scope>
    <scope>CATALYTIC ACTIVITY</scope>
    <scope>PATHWAY</scope>
    <scope>SUBUNIT</scope>
    <scope>ACTIVE SITE</scope>
    <scope>MUTAGENESIS OF SER-49; TYR-52; LYS-56 AND CYS-147</scope>
</reference>
<reference key="19">
    <citation type="journal article" date="1998" name="Clin. Genet.">
        <title>Molecular genetic analysis of the gene encoding the trifunctional enzyme MTHFD (methylenetetrahydrofolate-dehydrogenase, methenyltetrahydrofolate-cyclohydrolase, formyltetrahydrofolate synthetase) in patients with neural tube defects.</title>
        <authorList>
            <person name="Hol F.A."/>
            <person name="van der Put N.M.J."/>
            <person name="Geurds M.P.A."/>
            <person name="Heil S.G."/>
            <person name="Trijbels F.J.M."/>
            <person name="Hamel B.C.J."/>
            <person name="Mariman E.C.M."/>
            <person name="Blom H.J."/>
        </authorList>
    </citation>
    <scope>INVOLVEMENT IN SUSCEPTIBILITY TO NTDFS</scope>
    <scope>VARIANTS HIS-293 AND GLN-653</scope>
</reference>
<reference key="20">
    <citation type="journal article" date="2002" name="Am. J. Hum. Genet.">
        <title>A polymorphism, R653Q, in the trifunctional enzyme methylenetetrahydrofolate dehydrogenase/methenyltetrahydrofolate cyclohydrolase/formyltetrahydrofolate synthetase is a maternal genetic risk factor for neural tube defects: report of the Birth Defects Research Group.</title>
        <authorList>
            <person name="Brody L.C."/>
            <person name="Conley M."/>
            <person name="Cox C."/>
            <person name="Kirke P.N."/>
            <person name="McKeever M.P."/>
            <person name="Mills J.L."/>
            <person name="Molloy A.M."/>
            <person name="O'Leary V.B."/>
            <person name="Parle-McDermott A."/>
            <person name="Scott J.M."/>
            <person name="Swanson D.A."/>
        </authorList>
    </citation>
    <scope>INVOLVEMENT IN SUSCEPTIBILITY TO NTDFS</scope>
    <scope>VARIANT GLN-653</scope>
</reference>
<reference key="21">
    <citation type="journal article" date="2006" name="Eur. J. Hum. Genet.">
        <title>Confirmation of the R653Q polymorphism of the trifunctional C1-synthase enzyme as a maternal risk for neural tube defects in the Irish population.</title>
        <authorList>
            <person name="Parle-McDermott A."/>
            <person name="Kirke P.N."/>
            <person name="Mills J.L."/>
            <person name="Molloy A.M."/>
            <person name="Cox C."/>
            <person name="O'Leary V.B."/>
            <person name="Pangilinan F."/>
            <person name="Conley M."/>
            <person name="Cleary L."/>
            <person name="Brody L.C."/>
            <person name="Scott J.M."/>
        </authorList>
    </citation>
    <scope>INVOLVEMENT IN SUSCEPTIBILITY TO NTDFS</scope>
    <scope>VARIANT GLN-653</scope>
</reference>
<reference key="22">
    <citation type="journal article" date="2006" name="Hum. Mol. Genet.">
        <title>Search for low penetrance alleles for colorectal cancer through a scan of 1467 non-synonymous SNPs in 2575 cases and 2707 controls with validation by kin-cohort analysis of 14 704 first-degree relatives.</title>
        <authorList>
            <person name="Webb E.L."/>
            <person name="Rudd M.F."/>
            <person name="Sellick G.S."/>
            <person name="El Galta R."/>
            <person name="Bethke L."/>
            <person name="Wood W."/>
            <person name="Fletcher O."/>
            <person name="Penegar S."/>
            <person name="Withey L."/>
            <person name="Qureshi M."/>
            <person name="Johnson N."/>
            <person name="Tomlinson I."/>
            <person name="Gray R."/>
            <person name="Peto J."/>
            <person name="Houlston R.S."/>
        </authorList>
    </citation>
    <scope>ASSOCIATION WITH COLORECTAL CANCER SUSCEPTIBILITY</scope>
</reference>
<reference key="23">
    <citation type="journal article" date="2009" name="Hum. Mutat.">
        <title>The MTHFD1 p.Arg653Gln variant alters enzyme function and increases risk for congenital heart defects.</title>
        <authorList>
            <person name="Christensen K.E."/>
            <person name="Rohlicek C.V."/>
            <person name="Andelfinger G.U."/>
            <person name="Michaud J."/>
            <person name="Bigras J.-L."/>
            <person name="Richter A."/>
            <person name="Mackenzie R.E."/>
            <person name="Rozen R."/>
        </authorList>
    </citation>
    <scope>CHARACTERIZATION OF VARIANT GLN-653</scope>
    <scope>FUNCTION</scope>
    <scope>CATALYTIC ACTIVITY</scope>
    <scope>BIOPHYSICOCHEMICAL PROPERTIES</scope>
    <scope>PATHWAY</scope>
</reference>
<reference key="24">
    <citation type="journal article" date="2011" name="J. Med. Genet.">
        <title>Novel inborn error of folate metabolism: identification by exome capture and sequencing of mutations in the MTHFD1 gene in a single proband.</title>
        <authorList>
            <person name="Watkins D."/>
            <person name="Schwartzentruber J.A."/>
            <person name="Ganesh J."/>
            <person name="Orange J.S."/>
            <person name="Kaplan B.S."/>
            <person name="Nunez L.D."/>
            <person name="Majewski J."/>
            <person name="Rosenblatt D.S."/>
        </authorList>
    </citation>
    <scope>INVOLVEMENT IN CIMAH</scope>
    <scope>VARIANT CIMAH CYS-173</scope>
</reference>
<reference key="25">
    <citation type="journal article" date="2015" name="J. Inherit. Metab. Dis.">
        <title>Characterization and review of MTHFD1 deficiency: four new patients, cellular delineation and response to folic and folinic acid treatment.</title>
        <authorList>
            <person name="Burda P."/>
            <person name="Kuster A."/>
            <person name="Hjalmarson O."/>
            <person name="Suormala T."/>
            <person name="Buerer C."/>
            <person name="Lutz S."/>
            <person name="Roussey G."/>
            <person name="Christa L."/>
            <person name="Asin-Cayuela J."/>
            <person name="Kollberg G."/>
            <person name="Andersson B.A."/>
            <person name="Watkins D."/>
            <person name="Rosenblatt D.S."/>
            <person name="Fowler B."/>
            <person name="Holme E."/>
            <person name="Froese D.S."/>
            <person name="Baumgartner M.R."/>
        </authorList>
    </citation>
    <scope>INVOLVEMENT IN CIMAH</scope>
    <scope>VARIANTS CIMAH PHE-49; 225-GLU--PHE-935 DEL AND ILE-269</scope>
    <scope>FUNCTION</scope>
</reference>
<reference key="26">
    <citation type="journal article" date="2016" name="J. Allergy Clin. Immunol. Pract.">
        <title>Precision molecular diagnosis defines specific therapy in Combined Immunodeficiency with Megaloblastic Anemia Secondary to MTHFD1 deficiency.</title>
        <authorList>
            <person name="Ramakrishnan K.A."/>
            <person name="Pengelly R.J."/>
            <person name="Gao Y."/>
            <person name="Morgan M."/>
            <person name="Patel S.V."/>
            <person name="Davies E.G."/>
            <person name="Ennis S."/>
            <person name="Faust S.N."/>
            <person name="Williams A.P."/>
        </authorList>
    </citation>
    <scope>INVOLVEMENT IN CIMAH</scope>
    <scope>VARIANT CIMAH PRO-51</scope>
</reference>
<name>C1TC_HUMAN</name>
<comment type="function">
    <text evidence="2 9 10 12">Trifunctional enzyme that catalyzes the interconversion of three forms of one-carbon-substituted tetrahydrofolate: (6R)-5,10-methylene-5,6,7,8-tetrahydrofolate, 5,10-methenyltetrahydrofolate and (6S)-10-formyltetrahydrofolate (PubMed:10828945, PubMed:18767138, PubMed:1881876). These derivatives of tetrahydrofolate are differentially required in nucleotide and amino acid biosynthesis, (6S)-10-formyltetrahydrofolate being required for purine biosynthesis while (6R)-5,10-methylene-5,6,7,8-tetrahydrofolate is used for serine and methionine biosynthesis for instance (PubMed:18767138, PubMed:25633902).</text>
</comment>
<comment type="catalytic activity">
    <reaction evidence="2 9 10">
        <text>(6R)-5,10-methylene-5,6,7,8-tetrahydrofolate + NADP(+) = (6R)-5,10-methenyltetrahydrofolate + NADPH</text>
        <dbReference type="Rhea" id="RHEA:22812"/>
        <dbReference type="ChEBI" id="CHEBI:15636"/>
        <dbReference type="ChEBI" id="CHEBI:57455"/>
        <dbReference type="ChEBI" id="CHEBI:57783"/>
        <dbReference type="ChEBI" id="CHEBI:58349"/>
        <dbReference type="EC" id="1.5.1.5"/>
    </reaction>
    <physiologicalReaction direction="left-to-right" evidence="21">
        <dbReference type="Rhea" id="RHEA:22813"/>
    </physiologicalReaction>
</comment>
<comment type="catalytic activity">
    <reaction evidence="2 10">
        <text>(6R)-5,10-methenyltetrahydrofolate + H2O = (6R)-10-formyltetrahydrofolate + H(+)</text>
        <dbReference type="Rhea" id="RHEA:23700"/>
        <dbReference type="ChEBI" id="CHEBI:15377"/>
        <dbReference type="ChEBI" id="CHEBI:15378"/>
        <dbReference type="ChEBI" id="CHEBI:57455"/>
        <dbReference type="ChEBI" id="CHEBI:195366"/>
        <dbReference type="EC" id="3.5.4.9"/>
    </reaction>
</comment>
<comment type="catalytic activity">
    <reaction evidence="9 10">
        <text>(6S)-5,6,7,8-tetrahydrofolate + formate + ATP = (6R)-10-formyltetrahydrofolate + ADP + phosphate</text>
        <dbReference type="Rhea" id="RHEA:20221"/>
        <dbReference type="ChEBI" id="CHEBI:15740"/>
        <dbReference type="ChEBI" id="CHEBI:30616"/>
        <dbReference type="ChEBI" id="CHEBI:43474"/>
        <dbReference type="ChEBI" id="CHEBI:57453"/>
        <dbReference type="ChEBI" id="CHEBI:195366"/>
        <dbReference type="ChEBI" id="CHEBI:456216"/>
        <dbReference type="EC" id="6.3.4.3"/>
    </reaction>
</comment>
<comment type="biophysicochemical properties">
    <kinetics>
        <KM evidence="2">30.3 uM for ATP</KM>
        <KM evidence="2">364 uM for (6S)-5,6,7,8-tetrahydrofolate</KM>
        <KM evidence="2">36.7 mM for formate</KM>
        <Vmax evidence="2">13.2 umol/min/mg enzyme for the methylenetetrahydrofolate dehydrogenase activity</Vmax>
        <Vmax evidence="2">23.0 umol/min/mg enzyme for the formyltetrahydrofolate synthetase activity</Vmax>
    </kinetics>
</comment>
<comment type="pathway">
    <text evidence="2 9 10">One-carbon metabolism; tetrahydrofolate interconversion.</text>
</comment>
<comment type="subunit">
    <text evidence="2">Homodimer.</text>
</comment>
<comment type="interaction">
    <interactant intactId="EBI-709638">
        <id>P11586</id>
    </interactant>
    <interactant intactId="EBI-710918">
        <id>Q9WMX2</id>
    </interactant>
    <organismsDiffer>true</organismsDiffer>
    <experiments>3</experiments>
</comment>
<comment type="subcellular location">
    <subcellularLocation>
        <location evidence="22">Cytoplasm</location>
    </subcellularLocation>
</comment>
<comment type="tissue specificity">
    <text>Ubiquitous.</text>
</comment>
<comment type="domain">
    <text evidence="10">The N-terminal methylenetetrahydrofolate dehydrogenase and methenyltetrahydrofolate cyclohydrolase (D/C) domain carries both the methylenetetrahydrofolate dehydrogenase and methenyltetrahydrofolate cyclohydrolase activities.</text>
</comment>
<comment type="domain">
    <text evidence="10">The larger C-terminal formyltetrahydrofolate synthetase domain carries a third formyltetrahydrofolate synthetase activity.</text>
</comment>
<comment type="disease" evidence="3 7 16">
    <disease id="DI-01623">
        <name>Neural tube defects, folate-sensitive</name>
        <acronym>NTDFS</acronym>
        <description>The most common NTDs are open spina bifida (myelomeningocele) and anencephaly.</description>
        <dbReference type="MIM" id="601634"/>
    </disease>
    <text>Disease susceptibility is associated with variants affecting the gene represented in this entry.</text>
</comment>
<comment type="disease" evidence="8">
    <disease id="DI-01359">
        <name>Colorectal cancer</name>
        <acronym>CRC</acronym>
        <description>A complex disease characterized by malignant lesions arising from the inner wall of the large intestine (the colon) and the rectum. Genetic alterations are often associated with progression from premalignant lesion (adenoma) to invasive adenocarcinoma. Risk factors for cancer of the colon and rectum include colon polyps, long-standing ulcerative colitis, and genetic family history.</description>
        <dbReference type="MIM" id="114500"/>
    </disease>
    <text evidence="8">Disease susceptibility may be associated with variants affecting the gene represented in this entry. Susceptibility to colorectal cancer may be associated with the missense variant p.Arg134Lys, which has been observed in about 16% of the human population. The sequence shown in this entry represents the minor allele, as it is reported in the reference genome.</text>
</comment>
<comment type="disease" evidence="11 12 13">
    <disease id="DI-05147">
        <name>Combined immunodeficiency and megaloblastic anemia with or without hyperhomocysteinemia</name>
        <acronym>CIMAH</acronym>
        <description>An autosomal recessive disorder due to an inborn error of folate metabolism. Variable clinical manifestations include hemolytic uremic syndrome, macrocytosis, epilepsy, hearing loss, retinopathy, mild intellectual disability, and lymphopenia.</description>
        <dbReference type="MIM" id="617780"/>
    </disease>
    <text>The disease is caused by variants affecting the gene represented in this entry.</text>
</comment>
<comment type="similarity">
    <text evidence="20">In the N-terminal section; belongs to the tetrahydrofolate dehydrogenase/cyclohydrolase family.</text>
</comment>
<comment type="similarity">
    <text evidence="20">In the C-terminal section; belongs to the formate--tetrahydrofolate ligase family.</text>
</comment>
<organism>
    <name type="scientific">Homo sapiens</name>
    <name type="common">Human</name>
    <dbReference type="NCBI Taxonomy" id="9606"/>
    <lineage>
        <taxon>Eukaryota</taxon>
        <taxon>Metazoa</taxon>
        <taxon>Chordata</taxon>
        <taxon>Craniata</taxon>
        <taxon>Vertebrata</taxon>
        <taxon>Euteleostomi</taxon>
        <taxon>Mammalia</taxon>
        <taxon>Eutheria</taxon>
        <taxon>Euarchontoglires</taxon>
        <taxon>Primates</taxon>
        <taxon>Haplorrhini</taxon>
        <taxon>Catarrhini</taxon>
        <taxon>Hominidae</taxon>
        <taxon>Homo</taxon>
    </lineage>
</organism>
<feature type="chain" id="PRO_0000423280" description="C-1-tetrahydrofolate synthase, cytoplasmic">
    <location>
        <begin position="1"/>
        <end position="935"/>
    </location>
</feature>
<feature type="initiator methionine" description="Removed; alternate" evidence="4 14 18">
    <location>
        <position position="1"/>
    </location>
</feature>
<feature type="chain" id="PRO_0000199321" description="C-1-tetrahydrofolate synthase, cytoplasmic, N-terminally processed">
    <location>
        <begin position="2"/>
        <end position="935"/>
    </location>
</feature>
<feature type="region of interest" description="Methylenetetrahydrofolate dehydrogenase and methenyltetrahydrofolate cyclohydrolase (D/C) domain" evidence="10">
    <location>
        <begin position="2"/>
        <end position="291"/>
    </location>
</feature>
<feature type="region of interest" description="Formyltetrahydrofolate synthetase domain" evidence="10">
    <location>
        <begin position="310"/>
        <end position="935"/>
    </location>
</feature>
<feature type="active site" evidence="2">
    <location>
        <position position="56"/>
    </location>
</feature>
<feature type="binding site" evidence="2 24 25">
    <location>
        <begin position="52"/>
        <end position="56"/>
    </location>
    <ligand>
        <name>substrate</name>
    </ligand>
</feature>
<feature type="binding site" evidence="2 24 25">
    <location>
        <begin position="99"/>
        <end position="101"/>
    </location>
    <ligand>
        <name>substrate</name>
    </ligand>
</feature>
<feature type="binding site" evidence="2 15 23 24 25 26">
    <location>
        <begin position="172"/>
        <end position="174"/>
    </location>
    <ligand>
        <name>NADP(+)</name>
        <dbReference type="ChEBI" id="CHEBI:58349"/>
    </ligand>
</feature>
<feature type="binding site" evidence="2 15 23 24 25 26">
    <location>
        <position position="197"/>
    </location>
    <ligand>
        <name>NADP(+)</name>
        <dbReference type="ChEBI" id="CHEBI:58349"/>
    </ligand>
</feature>
<feature type="binding site" evidence="2 24 25">
    <location>
        <begin position="272"/>
        <end position="276"/>
    </location>
    <ligand>
        <name>substrate</name>
    </ligand>
</feature>
<feature type="binding site" evidence="1">
    <location>
        <begin position="380"/>
        <end position="387"/>
    </location>
    <ligand>
        <name>ATP</name>
        <dbReference type="ChEBI" id="CHEBI:30616"/>
    </ligand>
</feature>
<feature type="modified residue" description="N-acetylmethionine" evidence="27 28 29">
    <location>
        <position position="1"/>
    </location>
</feature>
<feature type="modified residue" description="Phosphoserine" evidence="30">
    <location>
        <position position="318"/>
    </location>
</feature>
<feature type="modified residue" description="Phosphoserine" evidence="30">
    <location>
        <position position="413"/>
    </location>
</feature>
<feature type="modified residue" description="Phosphoserine" evidence="30">
    <location>
        <position position="490"/>
    </location>
</feature>
<feature type="sequence variant" id="VAR_074075" description="In CIMAH; dbSNP:rs370444838." evidence="12">
    <original>S</original>
    <variation>F</variation>
    <location>
        <position position="49"/>
    </location>
</feature>
<feature type="sequence variant" id="VAR_080873" description="In CIMAH; dbSNP:rs1555336810." evidence="13">
    <original>L</original>
    <variation>P</variation>
    <location>
        <position position="51"/>
    </location>
</feature>
<feature type="sequence variant" id="VAR_016232" description="In dbSNP:rs1950902.">
    <original>K</original>
    <variation>R</variation>
    <location>
        <position position="134"/>
    </location>
</feature>
<feature type="sequence variant" id="VAR_055458" description="In dbSNP:rs4902283.">
    <original>P</original>
    <variation>L</variation>
    <location>
        <position position="162"/>
    </location>
</feature>
<feature type="sequence variant" id="VAR_074076" description="In CIMAH; dbSNP:rs141210410." evidence="11">
    <original>R</original>
    <variation>C</variation>
    <location>
        <position position="173"/>
    </location>
</feature>
<feature type="sequence variant" id="VAR_080874" description="In CIMAH." evidence="12">
    <location>
        <begin position="225"/>
        <end position="935"/>
    </location>
</feature>
<feature type="sequence variant" id="VAR_074077" description="In CIMAH; dbSNP:rs771978838." evidence="12">
    <original>T</original>
    <variation>I</variation>
    <location>
        <position position="269"/>
    </location>
</feature>
<feature type="sequence variant" id="VAR_010241" description="Probable risk factor for NTDFS; dbSNP:rs34181110.">
    <original>R</original>
    <variation>H</variation>
    <location>
        <position position="293"/>
    </location>
</feature>
<feature type="sequence variant" id="VAR_010251" description="Probable risk factor for NTDFS; decreased enzyme stability; no effect on methylenetetrahydrofolate dehydrogenase (NADP+) activity; no effect on formyltetrahydrofolate synthetase activity; dbSNP:rs2236225." evidence="5 6 9 16 17">
    <original>R</original>
    <variation>Q</variation>
    <location>
        <position position="653"/>
    </location>
</feature>
<feature type="sequence variant" id="VAR_032789" description="In dbSNP:rs10813.">
    <original>T</original>
    <variation>M</variation>
    <location>
        <position position="761"/>
    </location>
</feature>
<feature type="sequence variant" id="VAR_032790" description="In dbSNP:rs17857382." evidence="6">
    <original>L</original>
    <variation>F</variation>
    <location>
        <position position="769"/>
    </location>
</feature>
<feature type="mutagenesis site" description="No effect on methylenetetrahydrofolate dehydrogenase (NADP+) activity. No effect on methenyltetrahydrofolate cyclohydrolase activity. Decreased affinity for NADP." evidence="2">
    <original>S</original>
    <variation>A</variation>
    <location>
        <position position="49"/>
    </location>
</feature>
<feature type="mutagenesis site" description="Reduced methylenetetrahydrofolate dehydrogenase (NADP+) activity by 75%. Reduced methenyltetrahydrofolate cyclohydrolase activity by 99%. No effect on affinity for NADP and 5,10-methenyltetrahydrofolate." evidence="2">
    <original>S</original>
    <variation>Q</variation>
    <location>
        <position position="49"/>
    </location>
</feature>
<feature type="mutagenesis site" description="Reduced methylenetetrahydrofolate dehydrogenase (NADP+) activity by 99%. Reduced methenyltetrahydrofolate cyclohydrolase activity by 70%. No effect on affinity for NADP and 5,10-methenyltetrahydrofolate." evidence="2">
    <original>Y</original>
    <variation>A</variation>
    <variation>S</variation>
    <location>
        <position position="52"/>
    </location>
</feature>
<feature type="mutagenesis site" description="Slightly reduced methylenetetrahydrofolate dehydrogenase (NADP+) activity. Slightly reduced methenyltetrahydrofolate cyclohydrolase activity. Decreased affinity for NADP and for 5,10-methenyltetrahydrofolate." evidence="2">
    <original>Y</original>
    <variation>F</variation>
    <location>
        <position position="52"/>
    </location>
</feature>
<feature type="mutagenesis site" description="Decreased methylenetetrahydrofolate dehydrogenase (NADP+) activity over 90%. Loss of methenyltetrahydrofolate cyclohydrolase activity." evidence="2">
    <original>K</original>
    <variation>A</variation>
    <variation>I</variation>
    <variation>S</variation>
    <variation>T</variation>
    <location>
        <position position="56"/>
    </location>
</feature>
<feature type="mutagenesis site" description="Moderate decrease of methylenetetrahydrofolate dehydrogenase (NADP+) activity. Loss of methenyltetrahydrofolate cyclohydrolase activity. Strongly decreased affinity for NADP. Increased affinity for 5,10-methenyltetrahydrofolate." evidence="2">
    <original>K</original>
    <variation>E</variation>
    <variation>M</variation>
    <variation>Q</variation>
    <location>
        <position position="56"/>
    </location>
</feature>
<feature type="mutagenesis site" description="Reduced methylenetetrahydrofolate dehydrogenase (NADP+) activity. Reduced methenyltetrahydrofolate cyclohydrolase activity by 99%. No effect on affinity for NADP and 5,10-methenyltetrahydrofolate." evidence="2">
    <original>K</original>
    <variation>R</variation>
    <location>
        <position position="56"/>
    </location>
</feature>
<feature type="mutagenesis site" description="Reduced methylenetetrahydrofolate dehydrogenase (NADP+) activity by 50%. Reduced methenyltetrahydrofolate cyclohydrolase activity by 87%." evidence="2">
    <original>C</original>
    <variation>Q</variation>
    <location>
        <position position="147"/>
    </location>
</feature>
<feature type="helix" evidence="31">
    <location>
        <begin position="9"/>
        <end position="30"/>
    </location>
</feature>
<feature type="strand" evidence="31">
    <location>
        <begin position="37"/>
        <end position="44"/>
    </location>
</feature>
<feature type="helix" evidence="31">
    <location>
        <begin position="47"/>
        <end position="63"/>
    </location>
</feature>
<feature type="strand" evidence="31">
    <location>
        <begin position="66"/>
        <end position="72"/>
    </location>
</feature>
<feature type="helix" evidence="31">
    <location>
        <begin position="78"/>
        <end position="90"/>
    </location>
</feature>
<feature type="strand" evidence="31">
    <location>
        <begin position="96"/>
        <end position="99"/>
    </location>
</feature>
<feature type="helix" evidence="31">
    <location>
        <begin position="111"/>
        <end position="116"/>
    </location>
</feature>
<feature type="helix" evidence="31">
    <location>
        <begin position="120"/>
        <end position="122"/>
    </location>
</feature>
<feature type="helix" evidence="31">
    <location>
        <begin position="129"/>
        <end position="136"/>
    </location>
</feature>
<feature type="helix" evidence="31">
    <location>
        <begin position="147"/>
        <end position="157"/>
    </location>
</feature>
<feature type="turn" evidence="31">
    <location>
        <begin position="158"/>
        <end position="160"/>
    </location>
</feature>
<feature type="strand" evidence="31">
    <location>
        <begin position="167"/>
        <end position="171"/>
    </location>
</feature>
<feature type="turn" evidence="31">
    <location>
        <begin position="175"/>
        <end position="177"/>
    </location>
</feature>
<feature type="helix" evidence="31">
    <location>
        <begin position="178"/>
        <end position="187"/>
    </location>
</feature>
<feature type="strand" evidence="31">
    <location>
        <begin position="191"/>
        <end position="195"/>
    </location>
</feature>
<feature type="helix" evidence="31">
    <location>
        <begin position="202"/>
        <end position="206"/>
    </location>
</feature>
<feature type="strand" evidence="31">
    <location>
        <begin position="210"/>
        <end position="214"/>
    </location>
</feature>
<feature type="helix" evidence="31">
    <location>
        <begin position="224"/>
        <end position="226"/>
    </location>
</feature>
<feature type="strand" evidence="31">
    <location>
        <begin position="232"/>
        <end position="235"/>
    </location>
</feature>
<feature type="helix" evidence="31">
    <location>
        <begin position="258"/>
        <end position="261"/>
    </location>
</feature>
<feature type="turn" evidence="31">
    <location>
        <begin position="262"/>
        <end position="264"/>
    </location>
</feature>
<feature type="strand" evidence="31">
    <location>
        <begin position="266"/>
        <end position="268"/>
    </location>
</feature>
<feature type="strand" evidence="31">
    <location>
        <begin position="271"/>
        <end position="274"/>
    </location>
</feature>
<feature type="helix" evidence="31">
    <location>
        <begin position="275"/>
        <end position="295"/>
    </location>
</feature>
<evidence type="ECO:0000250" key="1"/>
<evidence type="ECO:0000269" key="2">
    <source>
    </source>
</evidence>
<evidence type="ECO:0000269" key="3">
    <source>
    </source>
</evidence>
<evidence type="ECO:0000269" key="4">
    <source>
    </source>
</evidence>
<evidence type="ECO:0000269" key="5">
    <source>
    </source>
</evidence>
<evidence type="ECO:0000269" key="6">
    <source>
    </source>
</evidence>
<evidence type="ECO:0000269" key="7">
    <source>
    </source>
</evidence>
<evidence type="ECO:0000269" key="8">
    <source>
    </source>
</evidence>
<evidence type="ECO:0000269" key="9">
    <source>
    </source>
</evidence>
<evidence type="ECO:0000269" key="10">
    <source>
    </source>
</evidence>
<evidence type="ECO:0000269" key="11">
    <source>
    </source>
</evidence>
<evidence type="ECO:0000269" key="12">
    <source>
    </source>
</evidence>
<evidence type="ECO:0000269" key="13">
    <source>
    </source>
</evidence>
<evidence type="ECO:0000269" key="14">
    <source>
    </source>
</evidence>
<evidence type="ECO:0000269" key="15">
    <source>
    </source>
</evidence>
<evidence type="ECO:0000269" key="16">
    <source>
    </source>
</evidence>
<evidence type="ECO:0000269" key="17">
    <source ref="5"/>
</evidence>
<evidence type="ECO:0000269" key="18">
    <source ref="8"/>
</evidence>
<evidence type="ECO:0000303" key="19">
    <source ref="3"/>
</evidence>
<evidence type="ECO:0000305" key="20"/>
<evidence type="ECO:0000305" key="21">
    <source>
    </source>
</evidence>
<evidence type="ECO:0000305" key="22">
    <source>
    </source>
</evidence>
<evidence type="ECO:0007744" key="23">
    <source>
        <dbReference type="PDB" id="1A4I"/>
    </source>
</evidence>
<evidence type="ECO:0007744" key="24">
    <source>
        <dbReference type="PDB" id="1DIA"/>
    </source>
</evidence>
<evidence type="ECO:0007744" key="25">
    <source>
        <dbReference type="PDB" id="1DIB"/>
    </source>
</evidence>
<evidence type="ECO:0007744" key="26">
    <source>
        <dbReference type="PDB" id="1DIG"/>
    </source>
</evidence>
<evidence type="ECO:0007744" key="27">
    <source>
    </source>
</evidence>
<evidence type="ECO:0007744" key="28">
    <source>
    </source>
</evidence>
<evidence type="ECO:0007744" key="29">
    <source>
    </source>
</evidence>
<evidence type="ECO:0007744" key="30">
    <source>
    </source>
</evidence>
<evidence type="ECO:0007829" key="31">
    <source>
        <dbReference type="PDB" id="1A4I"/>
    </source>
</evidence>
<dbReference type="EC" id="1.5.1.5" evidence="2 9 10"/>
<dbReference type="EC" id="3.5.4.9" evidence="2 10"/>
<dbReference type="EC" id="6.3.4.3" evidence="9 10"/>
<dbReference type="EMBL" id="J04031">
    <property type="protein sequence ID" value="AAA59574.1"/>
    <property type="molecule type" value="mRNA"/>
</dbReference>
<dbReference type="EMBL" id="AK312361">
    <property type="protein sequence ID" value="BAG35279.1"/>
    <property type="molecule type" value="mRNA"/>
</dbReference>
<dbReference type="EMBL" id="GQ891332">
    <property type="protein sequence ID" value="ADO22194.1"/>
    <property type="molecule type" value="mRNA"/>
</dbReference>
<dbReference type="EMBL" id="AL122035">
    <property type="status" value="NOT_ANNOTATED_CDS"/>
    <property type="molecule type" value="Genomic_DNA"/>
</dbReference>
<dbReference type="EMBL" id="CH471061">
    <property type="protein sequence ID" value="EAW80857.1"/>
    <property type="molecule type" value="Genomic_DNA"/>
</dbReference>
<dbReference type="EMBL" id="CH471061">
    <property type="protein sequence ID" value="EAW80858.1"/>
    <property type="molecule type" value="Genomic_DNA"/>
</dbReference>
<dbReference type="EMBL" id="BC001014">
    <property type="protein sequence ID" value="AAH01014.2"/>
    <property type="molecule type" value="mRNA"/>
</dbReference>
<dbReference type="EMBL" id="BC009806">
    <property type="protein sequence ID" value="AAH09806.1"/>
    <property type="molecule type" value="mRNA"/>
</dbReference>
<dbReference type="EMBL" id="BC050420">
    <property type="protein sequence ID" value="AAH50420.1"/>
    <property type="molecule type" value="mRNA"/>
</dbReference>
<dbReference type="CCDS" id="CCDS9763.1"/>
<dbReference type="PIR" id="A31903">
    <property type="entry name" value="A31903"/>
</dbReference>
<dbReference type="RefSeq" id="NP_005947.3">
    <property type="nucleotide sequence ID" value="NM_005956.3"/>
</dbReference>
<dbReference type="PDB" id="1A4I">
    <property type="method" value="X-ray"/>
    <property type="resolution" value="1.50 A"/>
    <property type="chains" value="A/B=1-301"/>
</dbReference>
<dbReference type="PDB" id="1DIA">
    <property type="method" value="X-ray"/>
    <property type="resolution" value="2.20 A"/>
    <property type="chains" value="A/B=1-306"/>
</dbReference>
<dbReference type="PDB" id="1DIB">
    <property type="method" value="X-ray"/>
    <property type="resolution" value="2.70 A"/>
    <property type="chains" value="A/B=1-306"/>
</dbReference>
<dbReference type="PDB" id="1DIG">
    <property type="method" value="X-ray"/>
    <property type="resolution" value="2.20 A"/>
    <property type="chains" value="A/B=1-306"/>
</dbReference>
<dbReference type="PDB" id="6ECP">
    <property type="method" value="X-ray"/>
    <property type="resolution" value="2.20 A"/>
    <property type="chains" value="A/B=1-306"/>
</dbReference>
<dbReference type="PDB" id="6ECQ">
    <property type="method" value="X-ray"/>
    <property type="resolution" value="2.70 A"/>
    <property type="chains" value="A/B=1-296"/>
</dbReference>
<dbReference type="PDB" id="6ECR">
    <property type="method" value="X-ray"/>
    <property type="resolution" value="2.20 A"/>
    <property type="chains" value="A/B=1-296"/>
</dbReference>
<dbReference type="PDB" id="9ISE">
    <property type="method" value="X-ray"/>
    <property type="resolution" value="1.99 A"/>
    <property type="chains" value="A/B/C/D=2-301"/>
</dbReference>
<dbReference type="PDB" id="9ISL">
    <property type="method" value="X-ray"/>
    <property type="resolution" value="2.06 A"/>
    <property type="chains" value="A/B/C/D=1-301"/>
</dbReference>
<dbReference type="PDB" id="9ISR">
    <property type="method" value="X-ray"/>
    <property type="resolution" value="2.50 A"/>
    <property type="chains" value="A/B/C/D=2-301"/>
</dbReference>
<dbReference type="PDB" id="9ITD">
    <property type="method" value="X-ray"/>
    <property type="resolution" value="2.28 A"/>
    <property type="chains" value="A/B/C/D=2-301"/>
</dbReference>
<dbReference type="PDB" id="9IUO">
    <property type="method" value="X-ray"/>
    <property type="resolution" value="2.09 A"/>
    <property type="chains" value="A/B/C/D=2-301"/>
</dbReference>
<dbReference type="PDBsum" id="1A4I"/>
<dbReference type="PDBsum" id="1DIA"/>
<dbReference type="PDBsum" id="1DIB"/>
<dbReference type="PDBsum" id="1DIG"/>
<dbReference type="PDBsum" id="6ECP"/>
<dbReference type="PDBsum" id="6ECQ"/>
<dbReference type="PDBsum" id="6ECR"/>
<dbReference type="PDBsum" id="9ISE"/>
<dbReference type="PDBsum" id="9ISL"/>
<dbReference type="PDBsum" id="9ISR"/>
<dbReference type="PDBsum" id="9ITD"/>
<dbReference type="PDBsum" id="9IUO"/>
<dbReference type="SMR" id="P11586"/>
<dbReference type="BioGRID" id="110622">
    <property type="interactions" value="289"/>
</dbReference>
<dbReference type="DIP" id="DIP-33682N"/>
<dbReference type="FunCoup" id="P11586">
    <property type="interactions" value="1990"/>
</dbReference>
<dbReference type="IntAct" id="P11586">
    <property type="interactions" value="75"/>
</dbReference>
<dbReference type="MINT" id="P11586"/>
<dbReference type="STRING" id="9606.ENSP00000498336"/>
<dbReference type="BindingDB" id="P11586"/>
<dbReference type="ChEMBL" id="CHEMBL2541"/>
<dbReference type="DrugBank" id="DB04322">
    <property type="generic name" value="LY249543"/>
</dbReference>
<dbReference type="DrugBank" id="DB02358">
    <property type="generic name" value="LY374571"/>
</dbReference>
<dbReference type="DrugBank" id="DB00157">
    <property type="generic name" value="NADH"/>
</dbReference>
<dbReference type="DrugBank" id="DB03461">
    <property type="generic name" value="Nicotinamide adenine dinucleotide phosphate"/>
</dbReference>
<dbReference type="DrugBank" id="DB00116">
    <property type="generic name" value="Tetrahydrofolic acid"/>
</dbReference>
<dbReference type="GlyGen" id="P11586">
    <property type="glycosylation" value="3 sites, 1 O-linked glycan (1 site)"/>
</dbReference>
<dbReference type="iPTMnet" id="P11586"/>
<dbReference type="MetOSite" id="P11586"/>
<dbReference type="PhosphoSitePlus" id="P11586"/>
<dbReference type="SwissPalm" id="P11586"/>
<dbReference type="BioMuta" id="MTHFD1"/>
<dbReference type="DMDM" id="115206"/>
<dbReference type="REPRODUCTION-2DPAGE" id="IPI00218342"/>
<dbReference type="CPTAC" id="CPTAC-407"/>
<dbReference type="CPTAC" id="CPTAC-408"/>
<dbReference type="jPOST" id="P11586"/>
<dbReference type="MassIVE" id="P11586"/>
<dbReference type="PaxDb" id="9606-ENSP00000216605"/>
<dbReference type="PeptideAtlas" id="P11586"/>
<dbReference type="ProteomicsDB" id="32586"/>
<dbReference type="ProteomicsDB" id="52794"/>
<dbReference type="Pumba" id="P11586"/>
<dbReference type="ABCD" id="P11586">
    <property type="antibodies" value="1 sequenced antibody"/>
</dbReference>
<dbReference type="Antibodypedia" id="52">
    <property type="antibodies" value="171 antibodies from 29 providers"/>
</dbReference>
<dbReference type="DNASU" id="4522"/>
<dbReference type="Ensembl" id="ENST00000651537.1">
    <property type="protein sequence ID" value="ENSP00000498511.1"/>
    <property type="gene ID" value="ENSG00000100714.18"/>
</dbReference>
<dbReference type="Ensembl" id="ENST00000652337.1">
    <property type="protein sequence ID" value="ENSP00000498336.1"/>
    <property type="gene ID" value="ENSG00000100714.18"/>
</dbReference>
<dbReference type="GeneID" id="4522"/>
<dbReference type="KEGG" id="hsa:4522"/>
<dbReference type="MANE-Select" id="ENST00000652337.1">
    <property type="protein sequence ID" value="ENSP00000498336.1"/>
    <property type="RefSeq nucleotide sequence ID" value="NM_005956.4"/>
    <property type="RefSeq protein sequence ID" value="NP_005947.3"/>
</dbReference>
<dbReference type="UCSC" id="uc001xhb.4">
    <property type="organism name" value="human"/>
</dbReference>
<dbReference type="AGR" id="HGNC:7432"/>
<dbReference type="CTD" id="4522"/>
<dbReference type="DisGeNET" id="4522"/>
<dbReference type="GeneCards" id="MTHFD1"/>
<dbReference type="HGNC" id="HGNC:7432">
    <property type="gene designation" value="MTHFD1"/>
</dbReference>
<dbReference type="HPA" id="ENSG00000100714">
    <property type="expression patterns" value="Tissue enriched (liver)"/>
</dbReference>
<dbReference type="MalaCards" id="MTHFD1"/>
<dbReference type="MIM" id="114500">
    <property type="type" value="phenotype"/>
</dbReference>
<dbReference type="MIM" id="172460">
    <property type="type" value="gene+phenotype"/>
</dbReference>
<dbReference type="MIM" id="601634">
    <property type="type" value="phenotype"/>
</dbReference>
<dbReference type="MIM" id="617780">
    <property type="type" value="phenotype"/>
</dbReference>
<dbReference type="neXtProt" id="NX_P11586"/>
<dbReference type="OpenTargets" id="ENSG00000100714"/>
<dbReference type="Orphanet" id="658813">
    <property type="disease" value="Combined immunodeficiency-megaloblastic anemia due to methylenetetrahydrofolate dehydrogenase 1 deficiency"/>
</dbReference>
<dbReference type="PharmGKB" id="PA31236"/>
<dbReference type="VEuPathDB" id="HostDB:ENSG00000100714"/>
<dbReference type="eggNOG" id="KOG4230">
    <property type="taxonomic scope" value="Eukaryota"/>
</dbReference>
<dbReference type="GeneTree" id="ENSGT00940000154746"/>
<dbReference type="HOGENOM" id="CLU_034045_3_0_1"/>
<dbReference type="InParanoid" id="P11586"/>
<dbReference type="OMA" id="QPIMFRR"/>
<dbReference type="OrthoDB" id="1845775at2759"/>
<dbReference type="PAN-GO" id="P11586">
    <property type="GO annotations" value="4 GO annotations based on evolutionary models"/>
</dbReference>
<dbReference type="PhylomeDB" id="P11586"/>
<dbReference type="TreeFam" id="TF300623"/>
<dbReference type="BioCyc" id="MetaCyc:HS02138-MONOMER"/>
<dbReference type="BRENDA" id="1.5.1.5">
    <property type="organism ID" value="2681"/>
</dbReference>
<dbReference type="BRENDA" id="3.5.4.9">
    <property type="organism ID" value="2681"/>
</dbReference>
<dbReference type="BRENDA" id="6.3.3.2">
    <property type="organism ID" value="2681"/>
</dbReference>
<dbReference type="BRENDA" id="6.3.4.3">
    <property type="organism ID" value="2681"/>
</dbReference>
<dbReference type="PathwayCommons" id="P11586"/>
<dbReference type="Reactome" id="R-HSA-196757">
    <property type="pathway name" value="Metabolism of folate and pterines"/>
</dbReference>
<dbReference type="SignaLink" id="P11586"/>
<dbReference type="SIGNOR" id="P11586"/>
<dbReference type="UniPathway" id="UPA00193"/>
<dbReference type="BioGRID-ORCS" id="4522">
    <property type="hits" value="222 hits in 1179 CRISPR screens"/>
</dbReference>
<dbReference type="CD-CODE" id="91857CE7">
    <property type="entry name" value="Nucleolus"/>
</dbReference>
<dbReference type="CD-CODE" id="DEE660B4">
    <property type="entry name" value="Stress granule"/>
</dbReference>
<dbReference type="CD-CODE" id="FB4E32DD">
    <property type="entry name" value="Presynaptic clusters and postsynaptic densities"/>
</dbReference>
<dbReference type="ChiTaRS" id="MTHFD1">
    <property type="organism name" value="human"/>
</dbReference>
<dbReference type="EvolutionaryTrace" id="P11586"/>
<dbReference type="GeneWiki" id="MTHFD1"/>
<dbReference type="GenomeRNAi" id="4522"/>
<dbReference type="Pharos" id="P11586">
    <property type="development level" value="Tchem"/>
</dbReference>
<dbReference type="PRO" id="PR:P11586"/>
<dbReference type="Proteomes" id="UP000005640">
    <property type="component" value="Chromosome 14"/>
</dbReference>
<dbReference type="RNAct" id="P11586">
    <property type="molecule type" value="protein"/>
</dbReference>
<dbReference type="Bgee" id="ENSG00000100714">
    <property type="expression patterns" value="Expressed in right lobe of liver and 202 other cell types or tissues"/>
</dbReference>
<dbReference type="ExpressionAtlas" id="P11586">
    <property type="expression patterns" value="baseline and differential"/>
</dbReference>
<dbReference type="GO" id="GO:0005829">
    <property type="term" value="C:cytosol"/>
    <property type="evidence" value="ECO:0000314"/>
    <property type="project" value="HPA"/>
</dbReference>
<dbReference type="GO" id="GO:0070062">
    <property type="term" value="C:extracellular exosome"/>
    <property type="evidence" value="ECO:0007005"/>
    <property type="project" value="UniProtKB"/>
</dbReference>
<dbReference type="GO" id="GO:0016020">
    <property type="term" value="C:membrane"/>
    <property type="evidence" value="ECO:0007005"/>
    <property type="project" value="UniProtKB"/>
</dbReference>
<dbReference type="GO" id="GO:0005739">
    <property type="term" value="C:mitochondrion"/>
    <property type="evidence" value="ECO:0000304"/>
    <property type="project" value="ProtInc"/>
</dbReference>
<dbReference type="GO" id="GO:0005524">
    <property type="term" value="F:ATP binding"/>
    <property type="evidence" value="ECO:0007669"/>
    <property type="project" value="UniProtKB-KW"/>
</dbReference>
<dbReference type="GO" id="GO:0004329">
    <property type="term" value="F:formate-tetrahydrofolate ligase activity"/>
    <property type="evidence" value="ECO:0000314"/>
    <property type="project" value="UniProtKB"/>
</dbReference>
<dbReference type="GO" id="GO:0004477">
    <property type="term" value="F:methenyltetrahydrofolate cyclohydrolase activity"/>
    <property type="evidence" value="ECO:0000314"/>
    <property type="project" value="UniProtKB"/>
</dbReference>
<dbReference type="GO" id="GO:0004487">
    <property type="term" value="F:methylenetetrahydrofolate dehydrogenase (NAD+) activity"/>
    <property type="evidence" value="ECO:0000250"/>
    <property type="project" value="BHF-UCL"/>
</dbReference>
<dbReference type="GO" id="GO:0004488">
    <property type="term" value="F:methylenetetrahydrofolate dehydrogenase (NADP+) activity"/>
    <property type="evidence" value="ECO:0000314"/>
    <property type="project" value="UniProtKB"/>
</dbReference>
<dbReference type="GO" id="GO:0004486">
    <property type="term" value="F:methylenetetrahydrofolate dehydrogenase [NAD(P)+] activity"/>
    <property type="evidence" value="ECO:0000314"/>
    <property type="project" value="BHF-UCL"/>
</dbReference>
<dbReference type="GO" id="GO:0009257">
    <property type="term" value="P:10-formyltetrahydrofolate biosynthetic process"/>
    <property type="evidence" value="ECO:0000314"/>
    <property type="project" value="BHF-UCL"/>
</dbReference>
<dbReference type="GO" id="GO:0048702">
    <property type="term" value="P:embryonic neurocranium morphogenesis"/>
    <property type="evidence" value="ECO:0000250"/>
    <property type="project" value="BHF-UCL"/>
</dbReference>
<dbReference type="GO" id="GO:0048703">
    <property type="term" value="P:embryonic viscerocranium morphogenesis"/>
    <property type="evidence" value="ECO:0000250"/>
    <property type="project" value="BHF-UCL"/>
</dbReference>
<dbReference type="GO" id="GO:0046655">
    <property type="term" value="P:folic acid metabolic process"/>
    <property type="evidence" value="ECO:0000315"/>
    <property type="project" value="BHF-UCL"/>
</dbReference>
<dbReference type="GO" id="GO:0007507">
    <property type="term" value="P:heart development"/>
    <property type="evidence" value="ECO:0000250"/>
    <property type="project" value="BHF-UCL"/>
</dbReference>
<dbReference type="GO" id="GO:0009086">
    <property type="term" value="P:methionine biosynthetic process"/>
    <property type="evidence" value="ECO:0000315"/>
    <property type="project" value="BHF-UCL"/>
</dbReference>
<dbReference type="GO" id="GO:0006555">
    <property type="term" value="P:methionine metabolic process"/>
    <property type="evidence" value="ECO:0000250"/>
    <property type="project" value="BHF-UCL"/>
</dbReference>
<dbReference type="GO" id="GO:0001843">
    <property type="term" value="P:neural tube closure"/>
    <property type="evidence" value="ECO:0000250"/>
    <property type="project" value="BHF-UCL"/>
</dbReference>
<dbReference type="GO" id="GO:0001780">
    <property type="term" value="P:neutrophil homeostasis"/>
    <property type="evidence" value="ECO:0007669"/>
    <property type="project" value="Ensembl"/>
</dbReference>
<dbReference type="GO" id="GO:0006164">
    <property type="term" value="P:purine nucleotide biosynthetic process"/>
    <property type="evidence" value="ECO:0000315"/>
    <property type="project" value="UniProtKB"/>
</dbReference>
<dbReference type="GO" id="GO:0009152">
    <property type="term" value="P:purine ribonucleotide biosynthetic process"/>
    <property type="evidence" value="ECO:0007669"/>
    <property type="project" value="Ensembl"/>
</dbReference>
<dbReference type="GO" id="GO:0061053">
    <property type="term" value="P:somite development"/>
    <property type="evidence" value="ECO:0000250"/>
    <property type="project" value="BHF-UCL"/>
</dbReference>
<dbReference type="GO" id="GO:0035999">
    <property type="term" value="P:tetrahydrofolate interconversion"/>
    <property type="evidence" value="ECO:0000314"/>
    <property type="project" value="UniProtKB"/>
</dbReference>
<dbReference type="GO" id="GO:0019346">
    <property type="term" value="P:transsulfuration"/>
    <property type="evidence" value="ECO:0007669"/>
    <property type="project" value="Ensembl"/>
</dbReference>
<dbReference type="CDD" id="cd00477">
    <property type="entry name" value="FTHFS"/>
    <property type="match status" value="1"/>
</dbReference>
<dbReference type="CDD" id="cd01080">
    <property type="entry name" value="NAD_bind_m-THF_DH_Cyclohyd"/>
    <property type="match status" value="1"/>
</dbReference>
<dbReference type="FunFam" id="3.40.50.720:FF:000006">
    <property type="entry name" value="Bifunctional protein FolD"/>
    <property type="match status" value="1"/>
</dbReference>
<dbReference type="FunFam" id="3.40.50.300:FF:000245">
    <property type="entry name" value="C-1-tetrahydrofolate synthase, cytoplasmic"/>
    <property type="match status" value="1"/>
</dbReference>
<dbReference type="FunFam" id="3.40.50.300:FF:001123">
    <property type="entry name" value="C-1-tetrahydrofolate synthase, cytoplasmic isoform X2"/>
    <property type="match status" value="1"/>
</dbReference>
<dbReference type="FunFam" id="3.40.50.10860:FF:000005">
    <property type="entry name" value="C-1-tetrahydrofolate synthase, cytoplasmic, putative"/>
    <property type="match status" value="1"/>
</dbReference>
<dbReference type="FunFam" id="1.10.8.770:FF:000001">
    <property type="entry name" value="Methylenetetrahydrofolate dehydrogenase (NADP+ dependent) 1 like"/>
    <property type="match status" value="1"/>
</dbReference>
<dbReference type="FunFam" id="3.10.410.10:FF:000001">
    <property type="entry name" value="Putative formate--tetrahydrofolate ligase"/>
    <property type="match status" value="1"/>
</dbReference>
<dbReference type="Gene3D" id="1.10.8.770">
    <property type="match status" value="1"/>
</dbReference>
<dbReference type="Gene3D" id="3.10.410.10">
    <property type="entry name" value="Formyltetrahydrofolate synthetase, domain 3"/>
    <property type="match status" value="1"/>
</dbReference>
<dbReference type="Gene3D" id="3.40.50.10860">
    <property type="entry name" value="Leucine Dehydrogenase, chain A, domain 1"/>
    <property type="match status" value="1"/>
</dbReference>
<dbReference type="Gene3D" id="3.40.50.720">
    <property type="entry name" value="NAD(P)-binding Rossmann-like Domain"/>
    <property type="match status" value="1"/>
</dbReference>
<dbReference type="Gene3D" id="3.40.50.300">
    <property type="entry name" value="P-loop containing nucleotide triphosphate hydrolases"/>
    <property type="match status" value="2"/>
</dbReference>
<dbReference type="HAMAP" id="MF_01543">
    <property type="entry name" value="FTHFS"/>
    <property type="match status" value="1"/>
</dbReference>
<dbReference type="HAMAP" id="MF_01576">
    <property type="entry name" value="THF_DHG_CYH"/>
    <property type="match status" value="1"/>
</dbReference>
<dbReference type="InterPro" id="IPR046346">
    <property type="entry name" value="Aminoacid_DH-like_N_sf"/>
</dbReference>
<dbReference type="InterPro" id="IPR000559">
    <property type="entry name" value="Formate_THF_ligase"/>
</dbReference>
<dbReference type="InterPro" id="IPR020628">
    <property type="entry name" value="Formate_THF_ligase_CS"/>
</dbReference>
<dbReference type="InterPro" id="IPR036291">
    <property type="entry name" value="NAD(P)-bd_dom_sf"/>
</dbReference>
<dbReference type="InterPro" id="IPR027417">
    <property type="entry name" value="P-loop_NTPase"/>
</dbReference>
<dbReference type="InterPro" id="IPR000672">
    <property type="entry name" value="THF_DH/CycHdrlase"/>
</dbReference>
<dbReference type="InterPro" id="IPR020630">
    <property type="entry name" value="THF_DH/CycHdrlase_cat_dom"/>
</dbReference>
<dbReference type="InterPro" id="IPR020867">
    <property type="entry name" value="THF_DH/CycHdrlase_CS"/>
</dbReference>
<dbReference type="InterPro" id="IPR020631">
    <property type="entry name" value="THF_DH/CycHdrlase_NAD-bd_dom"/>
</dbReference>
<dbReference type="PANTHER" id="PTHR48099:SF1">
    <property type="entry name" value="C-1-TETRAHYDROFOLATE SYNTHASE, CYTOPLASMIC"/>
    <property type="match status" value="1"/>
</dbReference>
<dbReference type="PANTHER" id="PTHR48099">
    <property type="entry name" value="C-1-TETRAHYDROFOLATE SYNTHASE, CYTOPLASMIC-RELATED"/>
    <property type="match status" value="1"/>
</dbReference>
<dbReference type="Pfam" id="PF01268">
    <property type="entry name" value="FTHFS"/>
    <property type="match status" value="1"/>
</dbReference>
<dbReference type="Pfam" id="PF00763">
    <property type="entry name" value="THF_DHG_CYH"/>
    <property type="match status" value="1"/>
</dbReference>
<dbReference type="Pfam" id="PF02882">
    <property type="entry name" value="THF_DHG_CYH_C"/>
    <property type="match status" value="1"/>
</dbReference>
<dbReference type="PRINTS" id="PR00085">
    <property type="entry name" value="THFDHDRGNASE"/>
</dbReference>
<dbReference type="SUPFAM" id="SSF53223">
    <property type="entry name" value="Aminoacid dehydrogenase-like, N-terminal domain"/>
    <property type="match status" value="1"/>
</dbReference>
<dbReference type="SUPFAM" id="SSF51735">
    <property type="entry name" value="NAD(P)-binding Rossmann-fold domains"/>
    <property type="match status" value="1"/>
</dbReference>
<dbReference type="SUPFAM" id="SSF52540">
    <property type="entry name" value="P-loop containing nucleoside triphosphate hydrolases"/>
    <property type="match status" value="1"/>
</dbReference>
<dbReference type="PROSITE" id="PS00721">
    <property type="entry name" value="FTHFS_1"/>
    <property type="match status" value="1"/>
</dbReference>
<dbReference type="PROSITE" id="PS00722">
    <property type="entry name" value="FTHFS_2"/>
    <property type="match status" value="1"/>
</dbReference>
<dbReference type="PROSITE" id="PS00766">
    <property type="entry name" value="THF_DHG_CYH_1"/>
    <property type="match status" value="1"/>
</dbReference>
<dbReference type="PROSITE" id="PS00767">
    <property type="entry name" value="THF_DHG_CYH_2"/>
    <property type="match status" value="1"/>
</dbReference>
<keyword id="KW-0002">3D-structure</keyword>
<keyword id="KW-0007">Acetylation</keyword>
<keyword id="KW-0067">ATP-binding</keyword>
<keyword id="KW-0963">Cytoplasm</keyword>
<keyword id="KW-0903">Direct protein sequencing</keyword>
<keyword id="KW-0225">Disease variant</keyword>
<keyword id="KW-0378">Hydrolase</keyword>
<keyword id="KW-0436">Ligase</keyword>
<keyword id="KW-0511">Multifunctional enzyme</keyword>
<keyword id="KW-0521">NADP</keyword>
<keyword id="KW-0547">Nucleotide-binding</keyword>
<keyword id="KW-0554">One-carbon metabolism</keyword>
<keyword id="KW-0560">Oxidoreductase</keyword>
<keyword id="KW-0597">Phosphoprotein</keyword>
<keyword id="KW-1267">Proteomics identification</keyword>
<keyword id="KW-1185">Reference proteome</keyword>
<accession>P11586</accession>
<accession>A0A024R652</accession>
<accession>A0A384N5Y3</accession>
<accession>B2R5Y2</accession>
<accession>G3V2B8</accession>
<accession>Q86VC9</accession>
<accession>Q9BVP5</accession>
<proteinExistence type="evidence at protein level"/>